<organism>
    <name type="scientific">Arabidopsis thaliana</name>
    <name type="common">Mouse-ear cress</name>
    <dbReference type="NCBI Taxonomy" id="3702"/>
    <lineage>
        <taxon>Eukaryota</taxon>
        <taxon>Viridiplantae</taxon>
        <taxon>Streptophyta</taxon>
        <taxon>Embryophyta</taxon>
        <taxon>Tracheophyta</taxon>
        <taxon>Spermatophyta</taxon>
        <taxon>Magnoliopsida</taxon>
        <taxon>eudicotyledons</taxon>
        <taxon>Gunneridae</taxon>
        <taxon>Pentapetalae</taxon>
        <taxon>rosids</taxon>
        <taxon>malvids</taxon>
        <taxon>Brassicales</taxon>
        <taxon>Brassicaceae</taxon>
        <taxon>Camelineae</taxon>
        <taxon>Arabidopsis</taxon>
    </lineage>
</organism>
<feature type="transit peptide" description="Mitochondrion" evidence="2">
    <location>
        <begin position="1"/>
        <end position="43"/>
    </location>
</feature>
<feature type="chain" id="PRO_0000371424" description="RNA pseudouridine synthase 4, mitochondrial">
    <location>
        <begin position="44"/>
        <end position="477"/>
    </location>
</feature>
<feature type="domain" description="S4 RNA-binding">
    <location>
        <begin position="90"/>
        <end position="175"/>
    </location>
</feature>
<feature type="region of interest" description="Disordered" evidence="3">
    <location>
        <begin position="34"/>
        <end position="55"/>
    </location>
</feature>
<feature type="compositionally biased region" description="Polar residues" evidence="3">
    <location>
        <begin position="36"/>
        <end position="48"/>
    </location>
</feature>
<feature type="active site" evidence="1">
    <location>
        <position position="236"/>
    </location>
</feature>
<sequence length="477" mass="52965">MAKWRLATATLRRQLQSSSPTISTFKNPTKALSAAAHQSTRSYSTTQTDDSRGKWLTLPPFSPTIDGTAVGKDLLSDGDSVKSSTDNSKTTALRWILRCRPDLPRTLVQKLFRLRQVRREMSMSVDGDELQRSQLKRVAAKESLNVGDRIYLPLSVDNDTPQTPPAKKESFQCSDEERKFVCSLVLYKDPAIIVLNKPHGLAVQGGSGIKTSIDELAASCLKFDKSESPRLVHRLDRDCSGLLVLARTQTAATVLHSIFREKTTGASAYGVKKNVKSLKRKYMALVIGCPPRQRGQISAPLRKVVVDDGKSERITVNDNGELVSTQHAITEYRVIESSPHGYTWLELRPLTGRKHQLRVHCAEVLGTPIVGDYKYGWQAHKAREPFVSSENNPTKQSSSPFGLDLDGGDVSSKQPHLHLHSKQIDLPNISQLLEKMQVSSDSDISDLDSLKFDAPLPSHMQLSFNLLKSRVETCDKN</sequence>
<gene>
    <name type="ordered locus">At3g19440</name>
    <name type="ORF">MLD14.18</name>
</gene>
<keyword id="KW-0413">Isomerase</keyword>
<keyword id="KW-0496">Mitochondrion</keyword>
<keyword id="KW-1185">Reference proteome</keyword>
<keyword id="KW-0694">RNA-binding</keyword>
<keyword id="KW-0809">Transit peptide</keyword>
<dbReference type="EC" id="5.4.99.-"/>
<dbReference type="EMBL" id="AB025624">
    <property type="protein sequence ID" value="BAB02469.1"/>
    <property type="molecule type" value="Genomic_DNA"/>
</dbReference>
<dbReference type="EMBL" id="CP002686">
    <property type="protein sequence ID" value="AEE76240.1"/>
    <property type="molecule type" value="Genomic_DNA"/>
</dbReference>
<dbReference type="EMBL" id="AK228911">
    <property type="protein sequence ID" value="BAF00800.1"/>
    <property type="molecule type" value="mRNA"/>
</dbReference>
<dbReference type="EMBL" id="BT030392">
    <property type="protein sequence ID" value="ABO45695.1"/>
    <property type="molecule type" value="mRNA"/>
</dbReference>
<dbReference type="RefSeq" id="NP_188575.1">
    <property type="nucleotide sequence ID" value="NM_112831.5"/>
</dbReference>
<dbReference type="SMR" id="Q9LT72"/>
<dbReference type="FunCoup" id="Q9LT72">
    <property type="interactions" value="2544"/>
</dbReference>
<dbReference type="STRING" id="3702.Q9LT72"/>
<dbReference type="iPTMnet" id="Q9LT72"/>
<dbReference type="PaxDb" id="3702-AT3G19440.1"/>
<dbReference type="ProteomicsDB" id="224794"/>
<dbReference type="EnsemblPlants" id="AT3G19440.1">
    <property type="protein sequence ID" value="AT3G19440.1"/>
    <property type="gene ID" value="AT3G19440"/>
</dbReference>
<dbReference type="GeneID" id="821478"/>
<dbReference type="Gramene" id="AT3G19440.1">
    <property type="protein sequence ID" value="AT3G19440.1"/>
    <property type="gene ID" value="AT3G19440"/>
</dbReference>
<dbReference type="KEGG" id="ath:AT3G19440"/>
<dbReference type="Araport" id="AT3G19440"/>
<dbReference type="TAIR" id="AT3G19440"/>
<dbReference type="eggNOG" id="KOG1919">
    <property type="taxonomic scope" value="Eukaryota"/>
</dbReference>
<dbReference type="HOGENOM" id="CLU_016902_13_0_1"/>
<dbReference type="InParanoid" id="Q9LT72"/>
<dbReference type="OMA" id="GRQAHQK"/>
<dbReference type="OrthoDB" id="428658at2759"/>
<dbReference type="PhylomeDB" id="Q9LT72"/>
<dbReference type="BioCyc" id="ARA:AT3G19440-MONOMER"/>
<dbReference type="PRO" id="PR:Q9LT72"/>
<dbReference type="Proteomes" id="UP000006548">
    <property type="component" value="Chromosome 3"/>
</dbReference>
<dbReference type="ExpressionAtlas" id="Q9LT72">
    <property type="expression patterns" value="baseline and differential"/>
</dbReference>
<dbReference type="GO" id="GO:0005739">
    <property type="term" value="C:mitochondrion"/>
    <property type="evidence" value="ECO:0007005"/>
    <property type="project" value="TAIR"/>
</dbReference>
<dbReference type="GO" id="GO:0009982">
    <property type="term" value="F:pseudouridine synthase activity"/>
    <property type="evidence" value="ECO:0000304"/>
    <property type="project" value="TAIR"/>
</dbReference>
<dbReference type="GO" id="GO:0003723">
    <property type="term" value="F:RNA binding"/>
    <property type="evidence" value="ECO:0007669"/>
    <property type="project" value="UniProtKB-KW"/>
</dbReference>
<dbReference type="GO" id="GO:0001522">
    <property type="term" value="P:pseudouridine synthesis"/>
    <property type="evidence" value="ECO:0007669"/>
    <property type="project" value="InterPro"/>
</dbReference>
<dbReference type="CDD" id="cd02869">
    <property type="entry name" value="PseudoU_synth_RluA_like"/>
    <property type="match status" value="1"/>
</dbReference>
<dbReference type="FunFam" id="3.30.2350.10:FF:000015">
    <property type="entry name" value="Mitochondrial RNA pseudouridine synthase RPUSD4"/>
    <property type="match status" value="1"/>
</dbReference>
<dbReference type="Gene3D" id="3.30.2350.10">
    <property type="entry name" value="Pseudouridine synthase"/>
    <property type="match status" value="1"/>
</dbReference>
<dbReference type="InterPro" id="IPR020103">
    <property type="entry name" value="PsdUridine_synth_cat_dom_sf"/>
</dbReference>
<dbReference type="InterPro" id="IPR006145">
    <property type="entry name" value="PsdUridine_synth_RsuA/RluA"/>
</dbReference>
<dbReference type="InterPro" id="IPR050188">
    <property type="entry name" value="RluA_PseudoU_synthase"/>
</dbReference>
<dbReference type="PANTHER" id="PTHR21600:SF81">
    <property type="entry name" value="21S RRNA PSEUDOURIDINE(2819) SYNTHASE"/>
    <property type="match status" value="1"/>
</dbReference>
<dbReference type="PANTHER" id="PTHR21600">
    <property type="entry name" value="MITOCHONDRIAL RNA PSEUDOURIDINE SYNTHASE"/>
    <property type="match status" value="1"/>
</dbReference>
<dbReference type="Pfam" id="PF00849">
    <property type="entry name" value="PseudoU_synth_2"/>
    <property type="match status" value="1"/>
</dbReference>
<dbReference type="SUPFAM" id="SSF55120">
    <property type="entry name" value="Pseudouridine synthase"/>
    <property type="match status" value="1"/>
</dbReference>
<protein>
    <recommendedName>
        <fullName>RNA pseudouridine synthase 4, mitochondrial</fullName>
        <ecNumber>5.4.99.-</ecNumber>
    </recommendedName>
    <alternativeName>
        <fullName>RNA pseudouridylate synthase 4</fullName>
    </alternativeName>
    <alternativeName>
        <fullName>RNA-uridine isomerase 4</fullName>
    </alternativeName>
</protein>
<comment type="catalytic activity">
    <reaction>
        <text>a uridine in RNA = a pseudouridine in RNA</text>
        <dbReference type="Rhea" id="RHEA:48348"/>
        <dbReference type="Rhea" id="RHEA-COMP:12068"/>
        <dbReference type="Rhea" id="RHEA-COMP:12069"/>
        <dbReference type="ChEBI" id="CHEBI:65314"/>
        <dbReference type="ChEBI" id="CHEBI:65315"/>
    </reaction>
</comment>
<comment type="subcellular location">
    <subcellularLocation>
        <location evidence="4">Mitochondrion</location>
    </subcellularLocation>
</comment>
<comment type="similarity">
    <text evidence="4">Belongs to the pseudouridine synthase RluA family.</text>
</comment>
<evidence type="ECO:0000250" key="1"/>
<evidence type="ECO:0000255" key="2"/>
<evidence type="ECO:0000256" key="3">
    <source>
        <dbReference type="SAM" id="MobiDB-lite"/>
    </source>
</evidence>
<evidence type="ECO:0000305" key="4"/>
<name>PUS4_ARATH</name>
<accession>Q9LT72</accession>
<proteinExistence type="evidence at transcript level"/>
<reference key="1">
    <citation type="journal article" date="2000" name="DNA Res.">
        <title>Structural analysis of Arabidopsis thaliana chromosome 3. I. Sequence features of the regions of 4,504,864 bp covered by sixty P1 and TAC clones.</title>
        <authorList>
            <person name="Sato S."/>
            <person name="Nakamura Y."/>
            <person name="Kaneko T."/>
            <person name="Katoh T."/>
            <person name="Asamizu E."/>
            <person name="Tabata S."/>
        </authorList>
    </citation>
    <scope>NUCLEOTIDE SEQUENCE [LARGE SCALE GENOMIC DNA]</scope>
    <source>
        <strain>cv. Columbia</strain>
    </source>
</reference>
<reference key="2">
    <citation type="journal article" date="2017" name="Plant J.">
        <title>Araport11: a complete reannotation of the Arabidopsis thaliana reference genome.</title>
        <authorList>
            <person name="Cheng C.Y."/>
            <person name="Krishnakumar V."/>
            <person name="Chan A.P."/>
            <person name="Thibaud-Nissen F."/>
            <person name="Schobel S."/>
            <person name="Town C.D."/>
        </authorList>
    </citation>
    <scope>GENOME REANNOTATION</scope>
    <source>
        <strain>cv. Columbia</strain>
    </source>
</reference>
<reference key="3">
    <citation type="submission" date="2006-07" db="EMBL/GenBank/DDBJ databases">
        <title>Large-scale analysis of RIKEN Arabidopsis full-length (RAFL) cDNAs.</title>
        <authorList>
            <person name="Totoki Y."/>
            <person name="Seki M."/>
            <person name="Ishida J."/>
            <person name="Nakajima M."/>
            <person name="Enju A."/>
            <person name="Kamiya A."/>
            <person name="Narusaka M."/>
            <person name="Shin-i T."/>
            <person name="Nakagawa M."/>
            <person name="Sakamoto N."/>
            <person name="Oishi K."/>
            <person name="Kohara Y."/>
            <person name="Kobayashi M."/>
            <person name="Toyoda A."/>
            <person name="Sakaki Y."/>
            <person name="Sakurai T."/>
            <person name="Iida K."/>
            <person name="Akiyama K."/>
            <person name="Satou M."/>
            <person name="Toyoda T."/>
            <person name="Konagaya A."/>
            <person name="Carninci P."/>
            <person name="Kawai J."/>
            <person name="Hayashizaki Y."/>
            <person name="Shinozaki K."/>
        </authorList>
    </citation>
    <scope>NUCLEOTIDE SEQUENCE [LARGE SCALE MRNA]</scope>
    <source>
        <strain>cv. Columbia</strain>
    </source>
</reference>
<reference key="4">
    <citation type="submission" date="2007-03" db="EMBL/GenBank/DDBJ databases">
        <title>Arabidopsis ORF clones.</title>
        <authorList>
            <person name="Kim C.J."/>
            <person name="Bautista V.R."/>
            <person name="Chen H."/>
            <person name="De Los Reyes C."/>
            <person name="Wu S.Y."/>
            <person name="Ecker J.R."/>
        </authorList>
    </citation>
    <scope>NUCLEOTIDE SEQUENCE [LARGE SCALE MRNA]</scope>
    <source>
        <strain>cv. Columbia</strain>
    </source>
</reference>